<protein>
    <recommendedName>
        <fullName>Arrestin domain-containing protein 5</fullName>
    </recommendedName>
</protein>
<feature type="chain" id="PRO_0000244358" description="Arrestin domain-containing protein 5">
    <location>
        <begin position="1"/>
        <end position="332"/>
    </location>
</feature>
<feature type="region of interest" description="Disordered" evidence="2">
    <location>
        <begin position="311"/>
        <end position="332"/>
    </location>
</feature>
<organism>
    <name type="scientific">Bos taurus</name>
    <name type="common">Bovine</name>
    <dbReference type="NCBI Taxonomy" id="9913"/>
    <lineage>
        <taxon>Eukaryota</taxon>
        <taxon>Metazoa</taxon>
        <taxon>Chordata</taxon>
        <taxon>Craniata</taxon>
        <taxon>Vertebrata</taxon>
        <taxon>Euteleostomi</taxon>
        <taxon>Mammalia</taxon>
        <taxon>Eutheria</taxon>
        <taxon>Laurasiatheria</taxon>
        <taxon>Artiodactyla</taxon>
        <taxon>Ruminantia</taxon>
        <taxon>Pecora</taxon>
        <taxon>Bovidae</taxon>
        <taxon>Bovinae</taxon>
        <taxon>Bos</taxon>
    </lineage>
</organism>
<name>ARRD5_BOVIN</name>
<accession>Q32KX1</accession>
<comment type="function">
    <text evidence="1">Plays an essential role in spermatogenesis. May be involved in the anchoring of the sperm head to the tail during spermatogenesis by affecting SEC22A-mediated SUN5 and NDC1 transport and localization.</text>
</comment>
<comment type="subcellular location">
    <subcellularLocation>
        <location evidence="1">Membrane</location>
    </subcellularLocation>
</comment>
<comment type="similarity">
    <text evidence="3">Belongs to the arrestin family.</text>
</comment>
<proteinExistence type="evidence at transcript level"/>
<reference key="1">
    <citation type="submission" date="2005-11" db="EMBL/GenBank/DDBJ databases">
        <authorList>
            <consortium name="NIH - Mammalian Gene Collection (MGC) project"/>
        </authorList>
    </citation>
    <scope>NUCLEOTIDE SEQUENCE [LARGE SCALE MRNA]</scope>
    <source>
        <strain>Crossbred X Angus</strain>
        <tissue>Liver</tissue>
    </source>
</reference>
<evidence type="ECO:0000250" key="1">
    <source>
        <dbReference type="UniProtKB" id="Q497K5"/>
    </source>
</evidence>
<evidence type="ECO:0000256" key="2">
    <source>
        <dbReference type="SAM" id="MobiDB-lite"/>
    </source>
</evidence>
<evidence type="ECO:0000305" key="3"/>
<keyword id="KW-0221">Differentiation</keyword>
<keyword id="KW-0472">Membrane</keyword>
<keyword id="KW-1185">Reference proteome</keyword>
<keyword id="KW-0744">Spermatogenesis</keyword>
<dbReference type="EMBL" id="BC109877">
    <property type="protein sequence ID" value="AAI09878.2"/>
    <property type="molecule type" value="mRNA"/>
</dbReference>
<dbReference type="RefSeq" id="NP_001121980.1">
    <property type="nucleotide sequence ID" value="NM_001128508.2"/>
</dbReference>
<dbReference type="SMR" id="Q32KX1"/>
<dbReference type="FunCoup" id="Q32KX1">
    <property type="interactions" value="1"/>
</dbReference>
<dbReference type="STRING" id="9913.ENSBTAP00000042349"/>
<dbReference type="PaxDb" id="9913-ENSBTAP00000042349"/>
<dbReference type="GeneID" id="617727"/>
<dbReference type="KEGG" id="bta:617727"/>
<dbReference type="CTD" id="645432"/>
<dbReference type="eggNOG" id="KOG3780">
    <property type="taxonomic scope" value="Eukaryota"/>
</dbReference>
<dbReference type="InParanoid" id="Q32KX1"/>
<dbReference type="OrthoDB" id="7785529at2759"/>
<dbReference type="Proteomes" id="UP000009136">
    <property type="component" value="Unplaced"/>
</dbReference>
<dbReference type="GO" id="GO:0005737">
    <property type="term" value="C:cytoplasm"/>
    <property type="evidence" value="ECO:0000318"/>
    <property type="project" value="GO_Central"/>
</dbReference>
<dbReference type="GO" id="GO:0005768">
    <property type="term" value="C:endosome"/>
    <property type="evidence" value="ECO:0000318"/>
    <property type="project" value="GO_Central"/>
</dbReference>
<dbReference type="GO" id="GO:0016020">
    <property type="term" value="C:membrane"/>
    <property type="evidence" value="ECO:0000250"/>
    <property type="project" value="UniProtKB"/>
</dbReference>
<dbReference type="GO" id="GO:0005886">
    <property type="term" value="C:plasma membrane"/>
    <property type="evidence" value="ECO:0000318"/>
    <property type="project" value="GO_Central"/>
</dbReference>
<dbReference type="GO" id="GO:0030154">
    <property type="term" value="P:cell differentiation"/>
    <property type="evidence" value="ECO:0007669"/>
    <property type="project" value="UniProtKB-KW"/>
</dbReference>
<dbReference type="GO" id="GO:0015031">
    <property type="term" value="P:protein transport"/>
    <property type="evidence" value="ECO:0000318"/>
    <property type="project" value="GO_Central"/>
</dbReference>
<dbReference type="GO" id="GO:0007283">
    <property type="term" value="P:spermatogenesis"/>
    <property type="evidence" value="ECO:0000250"/>
    <property type="project" value="UniProtKB"/>
</dbReference>
<dbReference type="Gene3D" id="2.60.40.640">
    <property type="match status" value="2"/>
</dbReference>
<dbReference type="InterPro" id="IPR014752">
    <property type="entry name" value="Arrestin-like_C"/>
</dbReference>
<dbReference type="InterPro" id="IPR011021">
    <property type="entry name" value="Arrestin-like_N"/>
</dbReference>
<dbReference type="InterPro" id="IPR011022">
    <property type="entry name" value="Arrestin_C-like"/>
</dbReference>
<dbReference type="InterPro" id="IPR050357">
    <property type="entry name" value="Arrestin_domain-protein"/>
</dbReference>
<dbReference type="InterPro" id="IPR014756">
    <property type="entry name" value="Ig_E-set"/>
</dbReference>
<dbReference type="PANTHER" id="PTHR11188">
    <property type="entry name" value="ARRESTIN DOMAIN CONTAINING PROTEIN"/>
    <property type="match status" value="1"/>
</dbReference>
<dbReference type="PANTHER" id="PTHR11188:SF172">
    <property type="entry name" value="ARRESTIN DOMAIN-CONTAINING PROTEIN 5"/>
    <property type="match status" value="1"/>
</dbReference>
<dbReference type="Pfam" id="PF02752">
    <property type="entry name" value="Arrestin_C"/>
    <property type="match status" value="1"/>
</dbReference>
<dbReference type="Pfam" id="PF00339">
    <property type="entry name" value="Arrestin_N"/>
    <property type="match status" value="1"/>
</dbReference>
<dbReference type="SMART" id="SM01017">
    <property type="entry name" value="Arrestin_C"/>
    <property type="match status" value="1"/>
</dbReference>
<dbReference type="SUPFAM" id="SSF81296">
    <property type="entry name" value="E set domains"/>
    <property type="match status" value="2"/>
</dbReference>
<sequence>MSVVKSIELVLPKDAVYLAGCIIEGQVVLTLNSTLVDPIVKVELVGRGYVEWNEETGASRDYSREVICNNKADYVHKTKTFPVEDNWLSAGSHTFDFHFNLPPRLPSTFTSKIGNIFYFVQASCMGREHILAKKKIYLMVQGTSSIFHSEKSLQNPLFVEAEKKVSYNCCSQGTICLQIQMEKNTFTPGERDIFTTEINNQTSKCIKTVIFALYAHVHYEGFTPNAERRSRVDSSELLRQEANTHITAFNTTKIVSTFHLPPVLSVSGSGSQDSEIMNTQYELVSTVHLPWTLTSVKAKVPIIITSNPVDSNQTAAGCRTRAPLPVSPDQQN</sequence>
<gene>
    <name type="primary">ARRDC5</name>
</gene>